<name>MINE_SYNY3</name>
<gene>
    <name type="primary">minE</name>
    <name type="ordered locus">ssl0546</name>
</gene>
<comment type="function">
    <text evidence="1">Prevents the cell division inhibition by proteins MinC and MinD at internal division sites while permitting inhibition at polar sites. This ensures cell division at the proper site by restricting the formation of a division septum at the midpoint of the long axis of the cell (By similarity).</text>
</comment>
<comment type="similarity">
    <text evidence="2">Belongs to the MinE family.</text>
</comment>
<dbReference type="EMBL" id="BA000022">
    <property type="protein sequence ID" value="BAA10661.1"/>
    <property type="molecule type" value="Genomic_DNA"/>
</dbReference>
<dbReference type="PIR" id="S76969">
    <property type="entry name" value="S76969"/>
</dbReference>
<dbReference type="SMR" id="Q55899"/>
<dbReference type="STRING" id="1148.gene:10500166"/>
<dbReference type="PaxDb" id="1148-1001782"/>
<dbReference type="EnsemblBacteria" id="BAA10661">
    <property type="protein sequence ID" value="BAA10661"/>
    <property type="gene ID" value="BAA10661"/>
</dbReference>
<dbReference type="KEGG" id="syn:ssl0546"/>
<dbReference type="eggNOG" id="COG0851">
    <property type="taxonomic scope" value="Bacteria"/>
</dbReference>
<dbReference type="InParanoid" id="Q55899"/>
<dbReference type="Proteomes" id="UP000001425">
    <property type="component" value="Chromosome"/>
</dbReference>
<dbReference type="GO" id="GO:0005886">
    <property type="term" value="C:plasma membrane"/>
    <property type="evidence" value="ECO:0000318"/>
    <property type="project" value="GO_Central"/>
</dbReference>
<dbReference type="GO" id="GO:0000918">
    <property type="term" value="P:division septum site selection"/>
    <property type="evidence" value="ECO:0000318"/>
    <property type="project" value="GO_Central"/>
</dbReference>
<dbReference type="GO" id="GO:0032955">
    <property type="term" value="P:regulation of division septum assembly"/>
    <property type="evidence" value="ECO:0007669"/>
    <property type="project" value="InterPro"/>
</dbReference>
<dbReference type="Gene3D" id="3.30.1070.10">
    <property type="entry name" value="Cell division topological specificity factor MinE"/>
    <property type="match status" value="1"/>
</dbReference>
<dbReference type="HAMAP" id="MF_00262">
    <property type="entry name" value="MinE"/>
    <property type="match status" value="1"/>
</dbReference>
<dbReference type="InterPro" id="IPR005527">
    <property type="entry name" value="MinE"/>
</dbReference>
<dbReference type="InterPro" id="IPR036707">
    <property type="entry name" value="MinE_sf"/>
</dbReference>
<dbReference type="NCBIfam" id="TIGR01215">
    <property type="entry name" value="minE"/>
    <property type="match status" value="1"/>
</dbReference>
<dbReference type="Pfam" id="PF03776">
    <property type="entry name" value="MinE"/>
    <property type="match status" value="1"/>
</dbReference>
<dbReference type="SUPFAM" id="SSF55229">
    <property type="entry name" value="Cell division protein MinE topological specificity domain"/>
    <property type="match status" value="1"/>
</dbReference>
<sequence length="97" mass="11239">MILELIERLFSRSGKNSGEDARRRLKLVIANDRSGLSPEMMEEMRREIVEVVSRYVEIDPGEMEFSLESDQRMTALIANLPVRRVRRTKAKSEAQES</sequence>
<accession>Q55899</accession>
<keyword id="KW-0131">Cell cycle</keyword>
<keyword id="KW-0132">Cell division</keyword>
<keyword id="KW-1185">Reference proteome</keyword>
<proteinExistence type="inferred from homology"/>
<feature type="chain" id="PRO_0000205889" description="Putative cell division topological specificity factor">
    <location>
        <begin position="1"/>
        <end position="97"/>
    </location>
</feature>
<reference key="1">
    <citation type="journal article" date="1995" name="DNA Res.">
        <title>Sequence analysis of the genome of the unicellular cyanobacterium Synechocystis sp. strain PCC6803. I. Sequence features in the 1 Mb region from map positions 64% to 92% of the genome.</title>
        <authorList>
            <person name="Kaneko T."/>
            <person name="Tanaka A."/>
            <person name="Sato S."/>
            <person name="Kotani H."/>
            <person name="Sazuka T."/>
            <person name="Miyajima N."/>
            <person name="Sugiura M."/>
            <person name="Tabata S."/>
        </authorList>
    </citation>
    <scope>NUCLEOTIDE SEQUENCE [LARGE SCALE GENOMIC DNA]</scope>
    <source>
        <strain>ATCC 27184 / PCC 6803 / N-1</strain>
    </source>
</reference>
<reference key="2">
    <citation type="journal article" date="1996" name="DNA Res.">
        <title>Sequence analysis of the genome of the unicellular cyanobacterium Synechocystis sp. strain PCC6803. II. Sequence determination of the entire genome and assignment of potential protein-coding regions.</title>
        <authorList>
            <person name="Kaneko T."/>
            <person name="Sato S."/>
            <person name="Kotani H."/>
            <person name="Tanaka A."/>
            <person name="Asamizu E."/>
            <person name="Nakamura Y."/>
            <person name="Miyajima N."/>
            <person name="Hirosawa M."/>
            <person name="Sugiura M."/>
            <person name="Sasamoto S."/>
            <person name="Kimura T."/>
            <person name="Hosouchi T."/>
            <person name="Matsuno A."/>
            <person name="Muraki A."/>
            <person name="Nakazaki N."/>
            <person name="Naruo K."/>
            <person name="Okumura S."/>
            <person name="Shimpo S."/>
            <person name="Takeuchi C."/>
            <person name="Wada T."/>
            <person name="Watanabe A."/>
            <person name="Yamada M."/>
            <person name="Yasuda M."/>
            <person name="Tabata S."/>
        </authorList>
    </citation>
    <scope>NUCLEOTIDE SEQUENCE [LARGE SCALE GENOMIC DNA]</scope>
    <source>
        <strain>ATCC 27184 / PCC 6803 / Kazusa</strain>
    </source>
</reference>
<evidence type="ECO:0000250" key="1"/>
<evidence type="ECO:0000305" key="2"/>
<protein>
    <recommendedName>
        <fullName>Putative cell division topological specificity factor</fullName>
    </recommendedName>
</protein>
<organism>
    <name type="scientific">Synechocystis sp. (strain ATCC 27184 / PCC 6803 / Kazusa)</name>
    <dbReference type="NCBI Taxonomy" id="1111708"/>
    <lineage>
        <taxon>Bacteria</taxon>
        <taxon>Bacillati</taxon>
        <taxon>Cyanobacteriota</taxon>
        <taxon>Cyanophyceae</taxon>
        <taxon>Synechococcales</taxon>
        <taxon>Merismopediaceae</taxon>
        <taxon>Synechocystis</taxon>
    </lineage>
</organism>